<comment type="function">
    <text evidence="1">Responsible for the transport of dicarboxylates such as succinate, fumarate, and malate from the periplasm across the membrane.</text>
</comment>
<comment type="subcellular location">
    <subcellularLocation>
        <location evidence="1">Cell inner membrane</location>
        <topology evidence="1">Multi-pass membrane protein</topology>
    </subcellularLocation>
</comment>
<comment type="similarity">
    <text evidence="1">Belongs to the dicarboxylate/amino acid:cation symporter (DAACS) (TC 2.A.23) family.</text>
</comment>
<organism>
    <name type="scientific">Escherichia fergusonii (strain ATCC 35469 / DSM 13698 / CCUG 18766 / IAM 14443 / JCM 21226 / LMG 7866 / NBRC 102419 / NCTC 12128 / CDC 0568-73)</name>
    <dbReference type="NCBI Taxonomy" id="585054"/>
    <lineage>
        <taxon>Bacteria</taxon>
        <taxon>Pseudomonadati</taxon>
        <taxon>Pseudomonadota</taxon>
        <taxon>Gammaproteobacteria</taxon>
        <taxon>Enterobacterales</taxon>
        <taxon>Enterobacteriaceae</taxon>
        <taxon>Escherichia</taxon>
    </lineage>
</organism>
<proteinExistence type="inferred from homology"/>
<keyword id="KW-0997">Cell inner membrane</keyword>
<keyword id="KW-1003">Cell membrane</keyword>
<keyword id="KW-0472">Membrane</keyword>
<keyword id="KW-0769">Symport</keyword>
<keyword id="KW-0812">Transmembrane</keyword>
<keyword id="KW-1133">Transmembrane helix</keyword>
<keyword id="KW-0813">Transport</keyword>
<accession>B7LT01</accession>
<protein>
    <recommendedName>
        <fullName evidence="1">C4-dicarboxylate transport protein</fullName>
    </recommendedName>
</protein>
<dbReference type="EMBL" id="CU928158">
    <property type="protein sequence ID" value="CAQ90990.1"/>
    <property type="molecule type" value="Genomic_DNA"/>
</dbReference>
<dbReference type="RefSeq" id="WP_000858214.1">
    <property type="nucleotide sequence ID" value="NC_011740.1"/>
</dbReference>
<dbReference type="SMR" id="B7LT01"/>
<dbReference type="GeneID" id="93778248"/>
<dbReference type="KEGG" id="efe:EFER_3513"/>
<dbReference type="HOGENOM" id="CLU_019375_7_0_6"/>
<dbReference type="OrthoDB" id="9766690at2"/>
<dbReference type="Proteomes" id="UP000000745">
    <property type="component" value="Chromosome"/>
</dbReference>
<dbReference type="GO" id="GO:0005886">
    <property type="term" value="C:plasma membrane"/>
    <property type="evidence" value="ECO:0007669"/>
    <property type="project" value="UniProtKB-SubCell"/>
</dbReference>
<dbReference type="GO" id="GO:0015138">
    <property type="term" value="F:fumarate transmembrane transporter activity"/>
    <property type="evidence" value="ECO:0007669"/>
    <property type="project" value="TreeGrafter"/>
</dbReference>
<dbReference type="GO" id="GO:0015366">
    <property type="term" value="F:malate:proton symporter activity"/>
    <property type="evidence" value="ECO:0007669"/>
    <property type="project" value="TreeGrafter"/>
</dbReference>
<dbReference type="GO" id="GO:0015141">
    <property type="term" value="F:succinate transmembrane transporter activity"/>
    <property type="evidence" value="ECO:0007669"/>
    <property type="project" value="TreeGrafter"/>
</dbReference>
<dbReference type="GO" id="GO:0070778">
    <property type="term" value="P:L-aspartate transmembrane transport"/>
    <property type="evidence" value="ECO:0007669"/>
    <property type="project" value="TreeGrafter"/>
</dbReference>
<dbReference type="FunFam" id="1.10.3860.10:FF:000001">
    <property type="entry name" value="C4-dicarboxylate transport protein"/>
    <property type="match status" value="1"/>
</dbReference>
<dbReference type="Gene3D" id="1.10.3860.10">
    <property type="entry name" value="Sodium:dicarboxylate symporter"/>
    <property type="match status" value="1"/>
</dbReference>
<dbReference type="HAMAP" id="MF_01300">
    <property type="entry name" value="C4_dicarb_transport"/>
    <property type="match status" value="1"/>
</dbReference>
<dbReference type="InterPro" id="IPR023954">
    <property type="entry name" value="C4_dicarb_transport"/>
</dbReference>
<dbReference type="InterPro" id="IPR001991">
    <property type="entry name" value="Na-dicarboxylate_symporter"/>
</dbReference>
<dbReference type="InterPro" id="IPR018107">
    <property type="entry name" value="Na-dicarboxylate_symporter_CS"/>
</dbReference>
<dbReference type="InterPro" id="IPR036458">
    <property type="entry name" value="Na:dicarbo_symporter_sf"/>
</dbReference>
<dbReference type="NCBIfam" id="NF002461">
    <property type="entry name" value="PRK01663.1"/>
    <property type="match status" value="1"/>
</dbReference>
<dbReference type="NCBIfam" id="NF009587">
    <property type="entry name" value="PRK13027.1"/>
    <property type="match status" value="1"/>
</dbReference>
<dbReference type="PANTHER" id="PTHR42865:SF1">
    <property type="entry name" value="AEROBIC C4-DICARBOXYLATE TRANSPORT PROTEIN"/>
    <property type="match status" value="1"/>
</dbReference>
<dbReference type="PANTHER" id="PTHR42865">
    <property type="entry name" value="PROTON/GLUTAMATE-ASPARTATE SYMPORTER"/>
    <property type="match status" value="1"/>
</dbReference>
<dbReference type="Pfam" id="PF00375">
    <property type="entry name" value="SDF"/>
    <property type="match status" value="1"/>
</dbReference>
<dbReference type="PRINTS" id="PR00173">
    <property type="entry name" value="EDTRNSPORT"/>
</dbReference>
<dbReference type="SUPFAM" id="SSF118215">
    <property type="entry name" value="Proton glutamate symport protein"/>
    <property type="match status" value="1"/>
</dbReference>
<dbReference type="PROSITE" id="PS00713">
    <property type="entry name" value="NA_DICARBOXYL_SYMP_1"/>
    <property type="match status" value="1"/>
</dbReference>
<dbReference type="PROSITE" id="PS00714">
    <property type="entry name" value="NA_DICARBOXYL_SYMP_2"/>
    <property type="match status" value="1"/>
</dbReference>
<gene>
    <name evidence="1" type="primary">dctA</name>
    <name type="ordered locus">EFER_3513</name>
</gene>
<name>DCTA_ESCF3</name>
<feature type="chain" id="PRO_1000140458" description="C4-dicarboxylate transport protein">
    <location>
        <begin position="1"/>
        <end position="428"/>
    </location>
</feature>
<feature type="transmembrane region" description="Helical" evidence="1">
    <location>
        <begin position="8"/>
        <end position="28"/>
    </location>
</feature>
<feature type="transmembrane region" description="Helical" evidence="1">
    <location>
        <begin position="44"/>
        <end position="64"/>
    </location>
</feature>
<feature type="transmembrane region" description="Helical" evidence="1">
    <location>
        <begin position="76"/>
        <end position="96"/>
    </location>
</feature>
<feature type="transmembrane region" description="Helical" evidence="1">
    <location>
        <begin position="142"/>
        <end position="162"/>
    </location>
</feature>
<feature type="transmembrane region" description="Helical" evidence="1">
    <location>
        <begin position="184"/>
        <end position="204"/>
    </location>
</feature>
<feature type="transmembrane region" description="Helical" evidence="1">
    <location>
        <begin position="222"/>
        <end position="242"/>
    </location>
</feature>
<feature type="transmembrane region" description="Helical" evidence="1">
    <location>
        <begin position="326"/>
        <end position="346"/>
    </location>
</feature>
<feature type="transmembrane region" description="Helical" evidence="1">
    <location>
        <begin position="352"/>
        <end position="372"/>
    </location>
</feature>
<reference key="1">
    <citation type="journal article" date="2009" name="PLoS Genet.">
        <title>Organised genome dynamics in the Escherichia coli species results in highly diverse adaptive paths.</title>
        <authorList>
            <person name="Touchon M."/>
            <person name="Hoede C."/>
            <person name="Tenaillon O."/>
            <person name="Barbe V."/>
            <person name="Baeriswyl S."/>
            <person name="Bidet P."/>
            <person name="Bingen E."/>
            <person name="Bonacorsi S."/>
            <person name="Bouchier C."/>
            <person name="Bouvet O."/>
            <person name="Calteau A."/>
            <person name="Chiapello H."/>
            <person name="Clermont O."/>
            <person name="Cruveiller S."/>
            <person name="Danchin A."/>
            <person name="Diard M."/>
            <person name="Dossat C."/>
            <person name="Karoui M.E."/>
            <person name="Frapy E."/>
            <person name="Garry L."/>
            <person name="Ghigo J.M."/>
            <person name="Gilles A.M."/>
            <person name="Johnson J."/>
            <person name="Le Bouguenec C."/>
            <person name="Lescat M."/>
            <person name="Mangenot S."/>
            <person name="Martinez-Jehanne V."/>
            <person name="Matic I."/>
            <person name="Nassif X."/>
            <person name="Oztas S."/>
            <person name="Petit M.A."/>
            <person name="Pichon C."/>
            <person name="Rouy Z."/>
            <person name="Ruf C.S."/>
            <person name="Schneider D."/>
            <person name="Tourret J."/>
            <person name="Vacherie B."/>
            <person name="Vallenet D."/>
            <person name="Medigue C."/>
            <person name="Rocha E.P.C."/>
            <person name="Denamur E."/>
        </authorList>
    </citation>
    <scope>NUCLEOTIDE SEQUENCE [LARGE SCALE GENOMIC DNA]</scope>
    <source>
        <strain>ATCC 35469 / DSM 13698 / BCRC 15582 / CCUG 18766 / IAM 14443 / JCM 21226 / LMG 7866 / NBRC 102419 / NCTC 12128 / CDC 0568-73</strain>
    </source>
</reference>
<sequence length="428" mass="45436">MKTSLFKSLYFQVLTAIAIGILLGHFYPEIGEQMKPLGDGFVKLIKMIIAPVIFCTVVTGIAGMESMKAVGRTGAVALLYFEIVSTIALIIGLIIVNVVQPGAGMNVDPATLDAKAVAVYADQAKDQGIVAFIMDVIPASVIGAFASGNILQVLLFAVLFGFALHRLGSKGQLIFNVIESFSQVIFGIINMIMRLAPIGAFGAMAFTIGKYGVGTLVQLGQLIICFYITCILFVVLVLGSIAKATGFSIFKFIRYIREELLIVLGTSSSESALPRMLDKMEKLGCRKSVVGLVIPTGYSFNLDGTSIYLTMAAVFIAQATNSQMDIVHQITLLIVLLLSSKGAAGVTGSGFIVLAATLSAVGHLPVAGLALILGIDRFMSEARALTNLVGNGVATIVVAKWVKELDHKKLDDVLNNRAPDGKTHELSS</sequence>
<evidence type="ECO:0000255" key="1">
    <source>
        <dbReference type="HAMAP-Rule" id="MF_01300"/>
    </source>
</evidence>